<protein>
    <recommendedName>
        <fullName>Putative phosphatase BU028/BU029</fullName>
        <ecNumber>3.1.3.-</ecNumber>
    </recommendedName>
</protein>
<accession>P57140</accession>
<accession>P57141</accession>
<organism>
    <name type="scientific">Buchnera aphidicola subsp. Acyrthosiphon pisum (strain APS)</name>
    <name type="common">Acyrthosiphon pisum symbiotic bacterium</name>
    <dbReference type="NCBI Taxonomy" id="107806"/>
    <lineage>
        <taxon>Bacteria</taxon>
        <taxon>Pseudomonadati</taxon>
        <taxon>Pseudomonadota</taxon>
        <taxon>Gammaproteobacteria</taxon>
        <taxon>Enterobacterales</taxon>
        <taxon>Erwiniaceae</taxon>
        <taxon>Buchnera</taxon>
    </lineage>
</organism>
<gene>
    <name type="ordered locus">BU028/BU029</name>
</gene>
<proteinExistence type="inferred from homology"/>
<sequence>MYRIIAVDLDGTLLTSENKITKYTKEIIQILIQKKFYFVFASGRHYIDIMKIKDSLKINIFIISSNGSKIYNLDNNLIFSDNLDENIASKLCRIKYSDKEIITQVYQNDQWYINNNKVENNFCSLLSSLQYKYFYPDDLNFKNISKIFFTSRNFQKLHILKRKIINFYGNKVHVNFSIPGCLEIVSGDHLKGYGLKLIANLLGVSLKNCIAFGDGMNDQDMLKVAGKAYIMKNSDPHLKIALPHLEIIESNDNDGVARCLNKIFIENNKEML</sequence>
<feature type="chain" id="PRO_0000054431" description="Putative phosphatase BU028/BU029">
    <location>
        <begin position="1"/>
        <end position="272"/>
    </location>
</feature>
<feature type="active site" description="Nucleophile" evidence="1">
    <location>
        <position position="8"/>
    </location>
</feature>
<feature type="binding site" evidence="1">
    <location>
        <position position="8"/>
    </location>
    <ligand>
        <name>Mg(2+)</name>
        <dbReference type="ChEBI" id="CHEBI:18420"/>
    </ligand>
</feature>
<feature type="binding site" evidence="1">
    <location>
        <position position="9"/>
    </location>
    <ligand>
        <name>phosphate</name>
        <dbReference type="ChEBI" id="CHEBI:43474"/>
    </ligand>
</feature>
<feature type="binding site" evidence="1">
    <location>
        <position position="10"/>
    </location>
    <ligand>
        <name>Mg(2+)</name>
        <dbReference type="ChEBI" id="CHEBI:18420"/>
    </ligand>
</feature>
<feature type="binding site" evidence="1">
    <location>
        <begin position="42"/>
        <end position="43"/>
    </location>
    <ligand>
        <name>phosphate</name>
        <dbReference type="ChEBI" id="CHEBI:43474"/>
    </ligand>
</feature>
<feature type="binding site" evidence="1">
    <location>
        <position position="191"/>
    </location>
    <ligand>
        <name>phosphate</name>
        <dbReference type="ChEBI" id="CHEBI:43474"/>
    </ligand>
</feature>
<feature type="binding site" evidence="1">
    <location>
        <position position="214"/>
    </location>
    <ligand>
        <name>Mg(2+)</name>
        <dbReference type="ChEBI" id="CHEBI:18420"/>
    </ligand>
</feature>
<feature type="binding site" evidence="1">
    <location>
        <position position="217"/>
    </location>
    <ligand>
        <name>phosphate</name>
        <dbReference type="ChEBI" id="CHEBI:43474"/>
    </ligand>
</feature>
<keyword id="KW-0378">Hydrolase</keyword>
<keyword id="KW-0460">Magnesium</keyword>
<keyword id="KW-0479">Metal-binding</keyword>
<keyword id="KW-1185">Reference proteome</keyword>
<reference key="1">
    <citation type="journal article" date="2000" name="Nature">
        <title>Genome sequence of the endocellular bacterial symbiont of aphids Buchnera sp. APS.</title>
        <authorList>
            <person name="Shigenobu S."/>
            <person name="Watanabe H."/>
            <person name="Hattori M."/>
            <person name="Sakaki Y."/>
            <person name="Ishikawa H."/>
        </authorList>
    </citation>
    <scope>NUCLEOTIDE SEQUENCE [LARGE SCALE GENOMIC DNA]</scope>
    <source>
        <strain>APS</strain>
    </source>
</reference>
<evidence type="ECO:0000250" key="1"/>
<evidence type="ECO:0000305" key="2"/>
<name>Y028_BUCAI</name>
<dbReference type="EC" id="3.1.3.-"/>
<dbReference type="EMBL" id="BA000003">
    <property type="protein sequence ID" value="BAB12755.1"/>
    <property type="status" value="ALT_FRAME"/>
    <property type="molecule type" value="Genomic_DNA"/>
</dbReference>
<dbReference type="EMBL" id="BA000003">
    <property type="protein sequence ID" value="BAB12756.1"/>
    <property type="status" value="ALT_FRAME"/>
    <property type="molecule type" value="Genomic_DNA"/>
</dbReference>
<dbReference type="RefSeq" id="NP_239869.1">
    <property type="nucleotide sequence ID" value="NC_002528.1"/>
</dbReference>
<dbReference type="RefSeq" id="NP_239870.1">
    <property type="nucleotide sequence ID" value="NC_002528.1"/>
</dbReference>
<dbReference type="RefSeq" id="WP_010895907.1">
    <property type="nucleotide sequence ID" value="NC_002528.1"/>
</dbReference>
<dbReference type="SMR" id="P57140"/>
<dbReference type="STRING" id="563178.BUAP5A_028"/>
<dbReference type="EnsemblBacteria" id="BAB12755">
    <property type="protein sequence ID" value="BAB12755"/>
    <property type="gene ID" value="BAB12755"/>
</dbReference>
<dbReference type="EnsemblBacteria" id="BAB12756">
    <property type="protein sequence ID" value="BAB12756"/>
    <property type="gene ID" value="BAB12756"/>
</dbReference>
<dbReference type="KEGG" id="buc:BU028"/>
<dbReference type="KEGG" id="buc:BU029"/>
<dbReference type="PATRIC" id="fig|107806.10.peg.40"/>
<dbReference type="eggNOG" id="COG0561">
    <property type="taxonomic scope" value="Bacteria"/>
</dbReference>
<dbReference type="HOGENOM" id="CLU_044146_5_2_6"/>
<dbReference type="Proteomes" id="UP000001806">
    <property type="component" value="Chromosome"/>
</dbReference>
<dbReference type="GO" id="GO:0000287">
    <property type="term" value="F:magnesium ion binding"/>
    <property type="evidence" value="ECO:0007669"/>
    <property type="project" value="UniProtKB-ARBA"/>
</dbReference>
<dbReference type="GO" id="GO:0016791">
    <property type="term" value="F:phosphatase activity"/>
    <property type="evidence" value="ECO:0007669"/>
    <property type="project" value="UniProtKB-ARBA"/>
</dbReference>
<dbReference type="CDD" id="cd07516">
    <property type="entry name" value="HAD_Pase"/>
    <property type="match status" value="1"/>
</dbReference>
<dbReference type="Gene3D" id="3.30.1240.10">
    <property type="match status" value="1"/>
</dbReference>
<dbReference type="Gene3D" id="3.40.50.1000">
    <property type="entry name" value="HAD superfamily/HAD-like"/>
    <property type="match status" value="1"/>
</dbReference>
<dbReference type="InterPro" id="IPR000150">
    <property type="entry name" value="Cof"/>
</dbReference>
<dbReference type="InterPro" id="IPR036412">
    <property type="entry name" value="HAD-like_sf"/>
</dbReference>
<dbReference type="InterPro" id="IPR006379">
    <property type="entry name" value="HAD-SF_hydro_IIB"/>
</dbReference>
<dbReference type="InterPro" id="IPR023214">
    <property type="entry name" value="HAD_sf"/>
</dbReference>
<dbReference type="NCBIfam" id="TIGR00099">
    <property type="entry name" value="Cof-subfamily"/>
    <property type="match status" value="1"/>
</dbReference>
<dbReference type="NCBIfam" id="TIGR01484">
    <property type="entry name" value="HAD-SF-IIB"/>
    <property type="match status" value="1"/>
</dbReference>
<dbReference type="PANTHER" id="PTHR47267">
    <property type="match status" value="1"/>
</dbReference>
<dbReference type="PANTHER" id="PTHR47267:SF4">
    <property type="entry name" value="PYRIDOXAL PHOSPHATE PHOSPHATASE YIGL"/>
    <property type="match status" value="1"/>
</dbReference>
<dbReference type="Pfam" id="PF08282">
    <property type="entry name" value="Hydrolase_3"/>
    <property type="match status" value="1"/>
</dbReference>
<dbReference type="SFLD" id="SFLDG01140">
    <property type="entry name" value="C2.B:_Phosphomannomutase_and_P"/>
    <property type="match status" value="1"/>
</dbReference>
<dbReference type="SFLD" id="SFLDS00003">
    <property type="entry name" value="Haloacid_Dehalogenase"/>
    <property type="match status" value="1"/>
</dbReference>
<dbReference type="SUPFAM" id="SSF56784">
    <property type="entry name" value="HAD-like"/>
    <property type="match status" value="1"/>
</dbReference>
<dbReference type="PROSITE" id="PS01228">
    <property type="entry name" value="COF_1"/>
    <property type="match status" value="1"/>
</dbReference>
<comment type="cofactor">
    <cofactor evidence="1">
        <name>Mg(2+)</name>
        <dbReference type="ChEBI" id="CHEBI:18420"/>
    </cofactor>
</comment>
<comment type="similarity">
    <text evidence="2">Belongs to the HAD-like hydrolase superfamily. Cof family.</text>
</comment>
<comment type="sequence caution" evidence="2">
    <conflict type="frameshift">
        <sequence resource="EMBL-CDS" id="BAB12756"/>
    </conflict>
</comment>